<organism>
    <name type="scientific">Salmonella typhi</name>
    <dbReference type="NCBI Taxonomy" id="90370"/>
    <lineage>
        <taxon>Bacteria</taxon>
        <taxon>Pseudomonadati</taxon>
        <taxon>Pseudomonadota</taxon>
        <taxon>Gammaproteobacteria</taxon>
        <taxon>Enterobacterales</taxon>
        <taxon>Enterobacteriaceae</taxon>
        <taxon>Salmonella</taxon>
    </lineage>
</organism>
<evidence type="ECO:0000255" key="1">
    <source>
        <dbReference type="HAMAP-Rule" id="MF_01306"/>
    </source>
</evidence>
<evidence type="ECO:0000305" key="2"/>
<reference key="1">
    <citation type="journal article" date="2001" name="Nature">
        <title>Complete genome sequence of a multiple drug resistant Salmonella enterica serovar Typhi CT18.</title>
        <authorList>
            <person name="Parkhill J."/>
            <person name="Dougan G."/>
            <person name="James K.D."/>
            <person name="Thomson N.R."/>
            <person name="Pickard D."/>
            <person name="Wain J."/>
            <person name="Churcher C.M."/>
            <person name="Mungall K.L."/>
            <person name="Bentley S.D."/>
            <person name="Holden M.T.G."/>
            <person name="Sebaihia M."/>
            <person name="Baker S."/>
            <person name="Basham D."/>
            <person name="Brooks K."/>
            <person name="Chillingworth T."/>
            <person name="Connerton P."/>
            <person name="Cronin A."/>
            <person name="Davis P."/>
            <person name="Davies R.M."/>
            <person name="Dowd L."/>
            <person name="White N."/>
            <person name="Farrar J."/>
            <person name="Feltwell T."/>
            <person name="Hamlin N."/>
            <person name="Haque A."/>
            <person name="Hien T.T."/>
            <person name="Holroyd S."/>
            <person name="Jagels K."/>
            <person name="Krogh A."/>
            <person name="Larsen T.S."/>
            <person name="Leather S."/>
            <person name="Moule S."/>
            <person name="O'Gaora P."/>
            <person name="Parry C."/>
            <person name="Quail M.A."/>
            <person name="Rutherford K.M."/>
            <person name="Simmonds M."/>
            <person name="Skelton J."/>
            <person name="Stevens K."/>
            <person name="Whitehead S."/>
            <person name="Barrell B.G."/>
        </authorList>
    </citation>
    <scope>NUCLEOTIDE SEQUENCE [LARGE SCALE GENOMIC DNA]</scope>
    <source>
        <strain>CT18</strain>
    </source>
</reference>
<reference key="2">
    <citation type="journal article" date="2003" name="J. Bacteriol.">
        <title>Comparative genomics of Salmonella enterica serovar Typhi strains Ty2 and CT18.</title>
        <authorList>
            <person name="Deng W."/>
            <person name="Liou S.-R."/>
            <person name="Plunkett G. III"/>
            <person name="Mayhew G.F."/>
            <person name="Rose D.J."/>
            <person name="Burland V."/>
            <person name="Kodoyianni V."/>
            <person name="Schwartz D.C."/>
            <person name="Blattner F.R."/>
        </authorList>
    </citation>
    <scope>NUCLEOTIDE SEQUENCE [LARGE SCALE GENOMIC DNA]</scope>
    <source>
        <strain>ATCC 700931 / Ty2</strain>
    </source>
</reference>
<protein>
    <recommendedName>
        <fullName evidence="1">Small ribosomal subunit protein uS4</fullName>
    </recommendedName>
    <alternativeName>
        <fullName evidence="2">30S ribosomal protein S4</fullName>
    </alternativeName>
</protein>
<proteinExistence type="inferred from homology"/>
<accession>Q8Z1X4</accession>
<comment type="function">
    <text evidence="1">One of the primary rRNA binding proteins, it binds directly to 16S rRNA where it nucleates assembly of the body of the 30S subunit.</text>
</comment>
<comment type="function">
    <text evidence="1">With S5 and S12 plays an important role in translational accuracy.</text>
</comment>
<comment type="subunit">
    <text evidence="1">Part of the 30S ribosomal subunit. Contacts protein S5. The interaction surface between S4 and S5 is involved in control of translational fidelity.</text>
</comment>
<comment type="similarity">
    <text evidence="1">Belongs to the universal ribosomal protein uS4 family.</text>
</comment>
<sequence length="206" mass="23413">MARYLGPKLKLSRREGTDLFLKSGVRAIDTKCKIGQAPGQHGARKPRLSDYGVQLREKQKVRRIYGVLERQFRNYYKEAARLKGNTGENLLALLEGRLDNVVYRMGFGATRAEARQLVSHKAIMVNGRVVNIASYQVSPNDVVSIREKAKKQSRVKAALELAEQREKPTWLEVDAGKMEGTYKRKPERSDLSADINEHLIVELYSK</sequence>
<keyword id="KW-0687">Ribonucleoprotein</keyword>
<keyword id="KW-0689">Ribosomal protein</keyword>
<keyword id="KW-0694">RNA-binding</keyword>
<keyword id="KW-0699">rRNA-binding</keyword>
<feature type="chain" id="PRO_0000132450" description="Small ribosomal subunit protein uS4">
    <location>
        <begin position="1"/>
        <end position="206"/>
    </location>
</feature>
<feature type="domain" description="S4 RNA-binding" evidence="1">
    <location>
        <begin position="96"/>
        <end position="156"/>
    </location>
</feature>
<gene>
    <name evidence="1" type="primary">rpsD</name>
    <name type="ordered locus">STY4382</name>
    <name type="ordered locus">t4089</name>
</gene>
<name>RS4_SALTI</name>
<dbReference type="EMBL" id="AL513382">
    <property type="protein sequence ID" value="CAD09170.1"/>
    <property type="molecule type" value="Genomic_DNA"/>
</dbReference>
<dbReference type="EMBL" id="AE014613">
    <property type="protein sequence ID" value="AAO71556.1"/>
    <property type="molecule type" value="Genomic_DNA"/>
</dbReference>
<dbReference type="RefSeq" id="NP_458484.1">
    <property type="nucleotide sequence ID" value="NC_003198.1"/>
</dbReference>
<dbReference type="RefSeq" id="WP_000135229.1">
    <property type="nucleotide sequence ID" value="NZ_WSUR01000046.1"/>
</dbReference>
<dbReference type="SMR" id="Q8Z1X4"/>
<dbReference type="STRING" id="220341.gene:17588210"/>
<dbReference type="KEGG" id="stt:t4089"/>
<dbReference type="KEGG" id="sty:STY4382"/>
<dbReference type="PATRIC" id="fig|220341.7.peg.4478"/>
<dbReference type="eggNOG" id="COG0522">
    <property type="taxonomic scope" value="Bacteria"/>
</dbReference>
<dbReference type="HOGENOM" id="CLU_092403_0_2_6"/>
<dbReference type="OMA" id="QLVVELY"/>
<dbReference type="OrthoDB" id="9803672at2"/>
<dbReference type="Proteomes" id="UP000000541">
    <property type="component" value="Chromosome"/>
</dbReference>
<dbReference type="Proteomes" id="UP000002670">
    <property type="component" value="Chromosome"/>
</dbReference>
<dbReference type="GO" id="GO:0015935">
    <property type="term" value="C:small ribosomal subunit"/>
    <property type="evidence" value="ECO:0007669"/>
    <property type="project" value="InterPro"/>
</dbReference>
<dbReference type="GO" id="GO:0019843">
    <property type="term" value="F:rRNA binding"/>
    <property type="evidence" value="ECO:0007669"/>
    <property type="project" value="UniProtKB-UniRule"/>
</dbReference>
<dbReference type="GO" id="GO:0003735">
    <property type="term" value="F:structural constituent of ribosome"/>
    <property type="evidence" value="ECO:0007669"/>
    <property type="project" value="InterPro"/>
</dbReference>
<dbReference type="GO" id="GO:0042274">
    <property type="term" value="P:ribosomal small subunit biogenesis"/>
    <property type="evidence" value="ECO:0007669"/>
    <property type="project" value="TreeGrafter"/>
</dbReference>
<dbReference type="GO" id="GO:0006412">
    <property type="term" value="P:translation"/>
    <property type="evidence" value="ECO:0007669"/>
    <property type="project" value="UniProtKB-UniRule"/>
</dbReference>
<dbReference type="CDD" id="cd00165">
    <property type="entry name" value="S4"/>
    <property type="match status" value="1"/>
</dbReference>
<dbReference type="FunFam" id="1.10.1050.10:FF:000001">
    <property type="entry name" value="30S ribosomal protein S4"/>
    <property type="match status" value="1"/>
</dbReference>
<dbReference type="FunFam" id="3.10.290.10:FF:000001">
    <property type="entry name" value="30S ribosomal protein S4"/>
    <property type="match status" value="1"/>
</dbReference>
<dbReference type="Gene3D" id="1.10.1050.10">
    <property type="entry name" value="Ribosomal Protein S4 Delta 41, Chain A, domain 1"/>
    <property type="match status" value="1"/>
</dbReference>
<dbReference type="Gene3D" id="3.10.290.10">
    <property type="entry name" value="RNA-binding S4 domain"/>
    <property type="match status" value="1"/>
</dbReference>
<dbReference type="HAMAP" id="MF_01306_B">
    <property type="entry name" value="Ribosomal_uS4_B"/>
    <property type="match status" value="1"/>
</dbReference>
<dbReference type="InterPro" id="IPR022801">
    <property type="entry name" value="Ribosomal_uS4"/>
</dbReference>
<dbReference type="InterPro" id="IPR005709">
    <property type="entry name" value="Ribosomal_uS4_bac-type"/>
</dbReference>
<dbReference type="InterPro" id="IPR018079">
    <property type="entry name" value="Ribosomal_uS4_CS"/>
</dbReference>
<dbReference type="InterPro" id="IPR001912">
    <property type="entry name" value="Ribosomal_uS4_N"/>
</dbReference>
<dbReference type="InterPro" id="IPR002942">
    <property type="entry name" value="S4_RNA-bd"/>
</dbReference>
<dbReference type="InterPro" id="IPR036986">
    <property type="entry name" value="S4_RNA-bd_sf"/>
</dbReference>
<dbReference type="NCBIfam" id="NF003717">
    <property type="entry name" value="PRK05327.1"/>
    <property type="match status" value="1"/>
</dbReference>
<dbReference type="NCBIfam" id="TIGR01017">
    <property type="entry name" value="rpsD_bact"/>
    <property type="match status" value="1"/>
</dbReference>
<dbReference type="PANTHER" id="PTHR11831">
    <property type="entry name" value="30S 40S RIBOSOMAL PROTEIN"/>
    <property type="match status" value="1"/>
</dbReference>
<dbReference type="PANTHER" id="PTHR11831:SF4">
    <property type="entry name" value="SMALL RIBOSOMAL SUBUNIT PROTEIN US4M"/>
    <property type="match status" value="1"/>
</dbReference>
<dbReference type="Pfam" id="PF00163">
    <property type="entry name" value="Ribosomal_S4"/>
    <property type="match status" value="1"/>
</dbReference>
<dbReference type="Pfam" id="PF01479">
    <property type="entry name" value="S4"/>
    <property type="match status" value="1"/>
</dbReference>
<dbReference type="SMART" id="SM01390">
    <property type="entry name" value="Ribosomal_S4"/>
    <property type="match status" value="1"/>
</dbReference>
<dbReference type="SMART" id="SM00363">
    <property type="entry name" value="S4"/>
    <property type="match status" value="1"/>
</dbReference>
<dbReference type="SUPFAM" id="SSF55174">
    <property type="entry name" value="Alpha-L RNA-binding motif"/>
    <property type="match status" value="1"/>
</dbReference>
<dbReference type="PROSITE" id="PS00632">
    <property type="entry name" value="RIBOSOMAL_S4"/>
    <property type="match status" value="1"/>
</dbReference>
<dbReference type="PROSITE" id="PS50889">
    <property type="entry name" value="S4"/>
    <property type="match status" value="1"/>
</dbReference>